<dbReference type="EMBL" id="AJ577609">
    <property type="protein sequence ID" value="CAE12194.1"/>
    <property type="molecule type" value="mRNA"/>
</dbReference>
<dbReference type="EMBL" id="AJ577608">
    <property type="protein sequence ID" value="CAE12193.1"/>
    <property type="molecule type" value="mRNA"/>
</dbReference>
<dbReference type="EMBL" id="BC108135">
    <property type="protein sequence ID" value="AAI08136.1"/>
    <property type="molecule type" value="mRNA"/>
</dbReference>
<dbReference type="RefSeq" id="NP_001003658.1">
    <property type="nucleotide sequence ID" value="NM_001003658.2"/>
</dbReference>
<dbReference type="RefSeq" id="XP_015314098.1">
    <property type="nucleotide sequence ID" value="XM_015458612.3"/>
</dbReference>
<dbReference type="RefSeq" id="XP_024835467.1">
    <property type="nucleotide sequence ID" value="XM_024979699.2"/>
</dbReference>
<dbReference type="RefSeq" id="XP_024835468.1">
    <property type="nucleotide sequence ID" value="XM_024979700.2"/>
</dbReference>
<dbReference type="RefSeq" id="XP_059733768.1">
    <property type="nucleotide sequence ID" value="XM_059877785.1"/>
</dbReference>
<dbReference type="BMRB" id="Q6EWQ7"/>
<dbReference type="SMR" id="Q6EWQ7"/>
<dbReference type="FunCoup" id="Q6EWQ7">
    <property type="interactions" value="2277"/>
</dbReference>
<dbReference type="STRING" id="9913.ENSBTAP00000069104"/>
<dbReference type="PaxDb" id="9913-ENSBTAP00000002616"/>
<dbReference type="PeptideAtlas" id="Q6EWQ7"/>
<dbReference type="Ensembl" id="ENSBTAT00000094840.1">
    <property type="protein sequence ID" value="ENSBTAP00000081787.1"/>
    <property type="gene ID" value="ENSBTAG00000002018.5"/>
</dbReference>
<dbReference type="GeneID" id="444990"/>
<dbReference type="KEGG" id="bta:444990"/>
<dbReference type="CTD" id="1984"/>
<dbReference type="VEuPathDB" id="HostDB:ENSBTAG00000002018"/>
<dbReference type="eggNOG" id="KOG3271">
    <property type="taxonomic scope" value="Eukaryota"/>
</dbReference>
<dbReference type="GeneTree" id="ENSGT00390000003738"/>
<dbReference type="HOGENOM" id="CLU_102600_0_0_1"/>
<dbReference type="InParanoid" id="Q6EWQ7"/>
<dbReference type="OMA" id="KDDVRMP"/>
<dbReference type="OrthoDB" id="9975114at2759"/>
<dbReference type="TreeFam" id="TF101534"/>
<dbReference type="Reactome" id="R-BTA-204626">
    <property type="pathway name" value="Hypusine synthesis from eIF5A-lysine"/>
</dbReference>
<dbReference type="Proteomes" id="UP000009136">
    <property type="component" value="Chromosome 19"/>
</dbReference>
<dbReference type="Bgee" id="ENSBTAG00000002018">
    <property type="expression patterns" value="Expressed in spermatocyte and 105 other cell types or tissues"/>
</dbReference>
<dbReference type="GO" id="GO:0005789">
    <property type="term" value="C:endoplasmic reticulum membrane"/>
    <property type="evidence" value="ECO:0007669"/>
    <property type="project" value="UniProtKB-SubCell"/>
</dbReference>
<dbReference type="GO" id="GO:0005634">
    <property type="term" value="C:nucleus"/>
    <property type="evidence" value="ECO:0007669"/>
    <property type="project" value="UniProtKB-SubCell"/>
</dbReference>
<dbReference type="GO" id="GO:0045202">
    <property type="term" value="C:synapse"/>
    <property type="evidence" value="ECO:0007669"/>
    <property type="project" value="Ensembl"/>
</dbReference>
<dbReference type="GO" id="GO:0043022">
    <property type="term" value="F:ribosome binding"/>
    <property type="evidence" value="ECO:0007669"/>
    <property type="project" value="InterPro"/>
</dbReference>
<dbReference type="GO" id="GO:0003723">
    <property type="term" value="F:RNA binding"/>
    <property type="evidence" value="ECO:0007669"/>
    <property type="project" value="UniProtKB-KW"/>
</dbReference>
<dbReference type="GO" id="GO:0003746">
    <property type="term" value="F:translation elongation factor activity"/>
    <property type="evidence" value="ECO:0000318"/>
    <property type="project" value="GO_Central"/>
</dbReference>
<dbReference type="GO" id="GO:0043065">
    <property type="term" value="P:positive regulation of apoptotic process"/>
    <property type="evidence" value="ECO:0007669"/>
    <property type="project" value="Ensembl"/>
</dbReference>
<dbReference type="GO" id="GO:0045901">
    <property type="term" value="P:positive regulation of translational elongation"/>
    <property type="evidence" value="ECO:0007669"/>
    <property type="project" value="InterPro"/>
</dbReference>
<dbReference type="GO" id="GO:0045905">
    <property type="term" value="P:positive regulation of translational termination"/>
    <property type="evidence" value="ECO:0007669"/>
    <property type="project" value="InterPro"/>
</dbReference>
<dbReference type="GO" id="GO:0006414">
    <property type="term" value="P:translational elongation"/>
    <property type="evidence" value="ECO:0000250"/>
    <property type="project" value="UniProtKB"/>
</dbReference>
<dbReference type="CDD" id="cd04468">
    <property type="entry name" value="S1_eIF5A"/>
    <property type="match status" value="1"/>
</dbReference>
<dbReference type="FunFam" id="2.30.30.30:FF:000007">
    <property type="entry name" value="Eukaryotic translation initiation factor 5A"/>
    <property type="match status" value="1"/>
</dbReference>
<dbReference type="FunFam" id="2.40.50.140:FF:000034">
    <property type="entry name" value="Eukaryotic translation initiation factor 5A"/>
    <property type="match status" value="1"/>
</dbReference>
<dbReference type="Gene3D" id="2.30.30.30">
    <property type="match status" value="1"/>
</dbReference>
<dbReference type="Gene3D" id="2.40.50.140">
    <property type="entry name" value="Nucleic acid-binding proteins"/>
    <property type="match status" value="1"/>
</dbReference>
<dbReference type="InterPro" id="IPR001884">
    <property type="entry name" value="IF5A-like"/>
</dbReference>
<dbReference type="InterPro" id="IPR048670">
    <property type="entry name" value="IF5A-like_N"/>
</dbReference>
<dbReference type="InterPro" id="IPR012340">
    <property type="entry name" value="NA-bd_OB-fold"/>
</dbReference>
<dbReference type="InterPro" id="IPR014722">
    <property type="entry name" value="Rib_uL2_dom2"/>
</dbReference>
<dbReference type="InterPro" id="IPR019769">
    <property type="entry name" value="Trans_elong_IF5A_hypusine_site"/>
</dbReference>
<dbReference type="InterPro" id="IPR020189">
    <property type="entry name" value="Transl_elong_IF5A_C"/>
</dbReference>
<dbReference type="InterPro" id="IPR008991">
    <property type="entry name" value="Translation_prot_SH3-like_sf"/>
</dbReference>
<dbReference type="NCBIfam" id="TIGR00037">
    <property type="entry name" value="eIF_5A"/>
    <property type="match status" value="1"/>
</dbReference>
<dbReference type="PANTHER" id="PTHR11673">
    <property type="entry name" value="TRANSLATION INITIATION FACTOR 5A FAMILY MEMBER"/>
    <property type="match status" value="1"/>
</dbReference>
<dbReference type="Pfam" id="PF01287">
    <property type="entry name" value="eIF-5a"/>
    <property type="match status" value="1"/>
</dbReference>
<dbReference type="Pfam" id="PF21485">
    <property type="entry name" value="IF5A-like_N"/>
    <property type="match status" value="1"/>
</dbReference>
<dbReference type="PIRSF" id="PIRSF003025">
    <property type="entry name" value="eIF5A"/>
    <property type="match status" value="1"/>
</dbReference>
<dbReference type="SMART" id="SM01376">
    <property type="entry name" value="eIF-5a"/>
    <property type="match status" value="1"/>
</dbReference>
<dbReference type="SUPFAM" id="SSF50249">
    <property type="entry name" value="Nucleic acid-binding proteins"/>
    <property type="match status" value="1"/>
</dbReference>
<dbReference type="SUPFAM" id="SSF50104">
    <property type="entry name" value="Translation proteins SH3-like domain"/>
    <property type="match status" value="1"/>
</dbReference>
<dbReference type="PROSITE" id="PS00302">
    <property type="entry name" value="IF5A_HYPUSINE"/>
    <property type="match status" value="1"/>
</dbReference>
<comment type="function">
    <text evidence="1 2">Translation factor that promotes translation elongation and termination, particularly upon ribosome stalling at specific amino acid sequence contexts (By similarity). Binds between the exit (E) and peptidyl (P) site of the ribosome and promotes rescue of stalled ribosome: specifically required for efficient translation of polyproline-containing peptides as well as other motifs that stall the ribosome. Acts as a ribosome quality control (RQC) cofactor by joining the RQC complex to facilitate peptidyl transfer during CAT tailing step (By similarity). Also involved in actin dynamics and cell cycle progression, mRNA decay and probably in a pathway involved in stress response and maintenance of cell wall integrity. With syntenin SDCBP, functions as a regulator of p53/TP53 and p53/TP53-dependent apoptosis. Also regulates TNF-alpha-mediated apoptosis. Mediates effects of polyamines on neuronal process extension and survival (By similarity). Is required for autophagy by assisting the ribosome in translating the ATG3 protein at a specific amino acid sequence, the 'ASP-ASP-Gly' motif, leading to the increase of the efficiency of ATG3 translation and facilitation of LC3B lipidation and autophagosome formation (By similarity).</text>
</comment>
<comment type="subunit">
    <text evidence="2 4">Binds to 80S ribosomes. Actively translating ribosomes show mutually exclusive binding of eIF5a (EIF5A or EIF5A2) and EEF2/eEF2 (By similarity). Interacts with DAPL1; interaction takes place at the polypeptide exit tunnel of hibernating ribosomes and prevents translation (By similarity). Interacts with DHPS. Interacts with SDCBP. Interacts with DOHH (By similarity).</text>
</comment>
<comment type="subcellular location">
    <subcellularLocation>
        <location evidence="2">Cytoplasm</location>
    </subcellularLocation>
    <subcellularLocation>
        <location evidence="2">Nucleus</location>
    </subcellularLocation>
    <subcellularLocation>
        <location evidence="2">Endoplasmic reticulum membrane</location>
        <topology evidence="2">Peripheral membrane protein</topology>
        <orientation evidence="2">Cytoplasmic side</orientation>
    </subcellularLocation>
    <text evidence="2">Hypusine modification promotes the nuclear export and cytoplasmic localization and there was a dynamic shift in the localization from predominantly cytoplasmic to primarily nuclear under apoptotic inducing conditions. Nuclear export of hypusinated protein is mediated by XPO4.</text>
</comment>
<comment type="PTM">
    <text evidence="2">Acetylated by PCAF/KAT2B, regulating its subcellular localization (By similarity). Deacetylated by SIRT2 (By similarity).</text>
</comment>
<comment type="PTM">
    <text evidence="2">Lys-50 undergoes hypusination, a unique post-translational modification that consists in the addition of a butylamino group from spermidine to lysine side chain, leading to the formation of the unusual amino acid hypusine. eIF-5As are the only known proteins to undergo this modification, which is essential for their function.</text>
</comment>
<comment type="similarity">
    <text evidence="5">Belongs to the eIF-5A family.</text>
</comment>
<organism>
    <name type="scientific">Bos taurus</name>
    <name type="common">Bovine</name>
    <dbReference type="NCBI Taxonomy" id="9913"/>
    <lineage>
        <taxon>Eukaryota</taxon>
        <taxon>Metazoa</taxon>
        <taxon>Chordata</taxon>
        <taxon>Craniata</taxon>
        <taxon>Vertebrata</taxon>
        <taxon>Euteleostomi</taxon>
        <taxon>Mammalia</taxon>
        <taxon>Eutheria</taxon>
        <taxon>Laurasiatheria</taxon>
        <taxon>Artiodactyla</taxon>
        <taxon>Ruminantia</taxon>
        <taxon>Pecora</taxon>
        <taxon>Bovidae</taxon>
        <taxon>Bovinae</taxon>
        <taxon>Bos</taxon>
    </lineage>
</organism>
<evidence type="ECO:0000250" key="1">
    <source>
        <dbReference type="UniProtKB" id="P23301"/>
    </source>
</evidence>
<evidence type="ECO:0000250" key="2">
    <source>
        <dbReference type="UniProtKB" id="P63241"/>
    </source>
</evidence>
<evidence type="ECO:0000250" key="3">
    <source>
        <dbReference type="UniProtKB" id="P63242"/>
    </source>
</evidence>
<evidence type="ECO:0000250" key="4">
    <source>
        <dbReference type="UniProtKB" id="Q6NX89"/>
    </source>
</evidence>
<evidence type="ECO:0000305" key="5"/>
<proteinExistence type="evidence at transcript level"/>
<keyword id="KW-0007">Acetylation</keyword>
<keyword id="KW-0963">Cytoplasm</keyword>
<keyword id="KW-0251">Elongation factor</keyword>
<keyword id="KW-0256">Endoplasmic reticulum</keyword>
<keyword id="KW-0385">Hypusine</keyword>
<keyword id="KW-0472">Membrane</keyword>
<keyword id="KW-0539">Nucleus</keyword>
<keyword id="KW-0648">Protein biosynthesis</keyword>
<keyword id="KW-1185">Reference proteome</keyword>
<keyword id="KW-0694">RNA-binding</keyword>
<protein>
    <recommendedName>
        <fullName evidence="2">Eukaryotic translation initiation factor 5A-1</fullName>
        <shortName>eIF-5A-1</shortName>
        <shortName>eIF-5A1</shortName>
    </recommendedName>
    <alternativeName>
        <fullName>Eukaryotic initiation factor 5A isoform 1</fullName>
        <shortName>eIF-5A</shortName>
    </alternativeName>
    <alternativeName>
        <fullName>eIF-4D</fullName>
    </alternativeName>
</protein>
<gene>
    <name evidence="2" type="primary">EIF5A</name>
</gene>
<reference key="1">
    <citation type="journal article" date="2004" name="DNA Seq.">
        <title>Molecular cloning of bovine eIF5A and deoxyhypusine synthase cDNA.</title>
        <authorList>
            <person name="Huang J.K."/>
            <person name="Tsai S."/>
            <person name="Huang G.H."/>
            <person name="Sershon V.C."/>
            <person name="Alley A.M."/>
            <person name="Wen L."/>
        </authorList>
    </citation>
    <scope>NUCLEOTIDE SEQUENCE [MRNA]</scope>
    <source>
        <tissue>Testis</tissue>
    </source>
</reference>
<reference key="2">
    <citation type="submission" date="2005-10" db="EMBL/GenBank/DDBJ databases">
        <authorList>
            <consortium name="NIH - Mammalian Gene Collection (MGC) project"/>
        </authorList>
    </citation>
    <scope>NUCLEOTIDE SEQUENCE [LARGE SCALE MRNA]</scope>
    <source>
        <strain>Hereford</strain>
        <tissue>Uterus</tissue>
    </source>
</reference>
<feature type="initiator methionine" description="Removed" evidence="2">
    <location>
        <position position="1"/>
    </location>
</feature>
<feature type="chain" id="PRO_0000142450" description="Eukaryotic translation initiation factor 5A-1">
    <location>
        <begin position="2"/>
        <end position="154"/>
    </location>
</feature>
<feature type="modified residue" description="N-acetylalanine" evidence="2">
    <location>
        <position position="2"/>
    </location>
</feature>
<feature type="modified residue" description="N6-acetyllysine" evidence="2">
    <location>
        <position position="47"/>
    </location>
</feature>
<feature type="modified residue" description="Hypusine" evidence="2">
    <location>
        <position position="50"/>
    </location>
</feature>
<feature type="modified residue" description="N6-acetyllysine" evidence="3">
    <location>
        <position position="121"/>
    </location>
</feature>
<name>IF5A1_BOVIN</name>
<accession>Q6EWQ7</accession>
<accession>Q32PF5</accession>
<sequence>MADDLDFETGDAGASATFPMQCSALRKNGFVVLKGRPCKIVEMSTSKTGKHGHAKVHLVGIDIFTGKKYEDICPSTHNMDVPNIKRNDFQLIGIQDGYLSLLQDSGEVREDLRLPEGDLGKEIEQKYDCGEEILITVLSAMTEEAAVAIKAMAK</sequence>